<accession>Q9UHG0</accession>
<accession>Q5VTR8</accession>
<accession>Q5VTR9</accession>
<accession>Q86W35</accession>
<accession>Q9UFD1</accession>
<accession>Q9UHG1</accession>
<accession>Q9ULR6</accession>
<protein>
    <recommendedName>
        <fullName>Doublecortin domain-containing protein 2</fullName>
    </recommendedName>
    <alternativeName>
        <fullName>Protein RU2S</fullName>
    </alternativeName>
</protein>
<gene>
    <name type="primary">DCDC2</name>
    <name type="synonym">KIAA1154</name>
    <name type="synonym">RU2</name>
</gene>
<comment type="function">
    <text evidence="1 8 9 10">Protein that plays a role in the inhibition of canonical Wnt signaling pathway (PubMed:25557784). May be involved in neuronal migration during development of the cerebral neocortex (By similarity). Involved in the control of ciliogenesis and ciliary length (PubMed:25601850, PubMed:27319779).</text>
</comment>
<comment type="subunit">
    <text evidence="8">Interacts with DVL1, DVL2 and DVL3.</text>
</comment>
<comment type="interaction">
    <interactant intactId="EBI-10303987">
        <id>Q9UHG0</id>
    </interactant>
    <interactant intactId="EBI-3923833">
        <id>Q9BYG0</id>
        <label>B3GNT5</label>
    </interactant>
    <organismsDiffer>false</organismsDiffer>
    <experiments>3</experiments>
</comment>
<comment type="interaction">
    <interactant intactId="EBI-10303987">
        <id>Q9UHG0</id>
    </interactant>
    <interactant intactId="EBI-2874691">
        <id>Q9P296</id>
        <label>C5AR2</label>
    </interactant>
    <organismsDiffer>false</organismsDiffer>
    <experiments>3</experiments>
</comment>
<comment type="interaction">
    <interactant intactId="EBI-10303987">
        <id>Q9UHG0</id>
    </interactant>
    <interactant intactId="EBI-745954">
        <id>Q9BU64</id>
        <label>CENPO</label>
    </interactant>
    <organismsDiffer>false</organismsDiffer>
    <experiments>3</experiments>
</comment>
<comment type="interaction">
    <interactant intactId="EBI-10303987">
        <id>Q9UHG0</id>
    </interactant>
    <interactant intactId="EBI-456371">
        <id>P61024</id>
        <label>CKS1B</label>
    </interactant>
    <organismsDiffer>false</organismsDiffer>
    <experiments>3</experiments>
</comment>
<comment type="interaction">
    <interactant intactId="EBI-10303987">
        <id>Q9UHG0</id>
    </interactant>
    <interactant intactId="EBI-1550510">
        <id>Q9P000</id>
        <label>COMMD9</label>
    </interactant>
    <organismsDiffer>false</organismsDiffer>
    <experiments>3</experiments>
</comment>
<comment type="interaction">
    <interactant intactId="EBI-10303987">
        <id>Q9UHG0</id>
    </interactant>
    <interactant intactId="EBI-11521003">
        <id>Q9UIA0</id>
        <label>CYTH4</label>
    </interactant>
    <organismsDiffer>false</organismsDiffer>
    <experiments>3</experiments>
</comment>
<comment type="interaction">
    <interactant intactId="EBI-10303987">
        <id>Q9UHG0</id>
    </interactant>
    <interactant intactId="EBI-8568452">
        <id>Q8TCX1-2</id>
        <label>DYNC2LI1</label>
    </interactant>
    <organismsDiffer>false</organismsDiffer>
    <experiments>3</experiments>
</comment>
<comment type="interaction">
    <interactant intactId="EBI-10303987">
        <id>Q9UHG0</id>
    </interactant>
    <interactant intactId="EBI-22730131">
        <id>Q8IZS6</id>
        <label>DYNLT2</label>
    </interactant>
    <organismsDiffer>false</organismsDiffer>
    <experiments>3</experiments>
</comment>
<comment type="interaction">
    <interactant intactId="EBI-10303987">
        <id>Q9UHG0</id>
    </interactant>
    <interactant intactId="EBI-8638992">
        <id>Q9NWS6</id>
        <label>FAM118A</label>
    </interactant>
    <organismsDiffer>false</organismsDiffer>
    <experiments>3</experiments>
</comment>
<comment type="interaction">
    <interactant intactId="EBI-10303987">
        <id>Q9UHG0</id>
    </interactant>
    <interactant intactId="EBI-746682">
        <id>Q9NVN8</id>
        <label>GNL3L</label>
    </interactant>
    <organismsDiffer>false</organismsDiffer>
    <experiments>3</experiments>
</comment>
<comment type="interaction">
    <interactant intactId="EBI-10303987">
        <id>Q9UHG0</id>
    </interactant>
    <interactant intactId="EBI-12165207">
        <id>Q86X24</id>
        <label>HORMAD1</label>
    </interactant>
    <organismsDiffer>false</organismsDiffer>
    <experiments>3</experiments>
</comment>
<comment type="interaction">
    <interactant intactId="EBI-10303987">
        <id>Q9UHG0</id>
    </interactant>
    <interactant intactId="EBI-3958099">
        <id>P26371</id>
        <label>KRTAP5-9</label>
    </interactant>
    <organismsDiffer>false</organismsDiffer>
    <experiments>3</experiments>
</comment>
<comment type="interaction">
    <interactant intactId="EBI-10303987">
        <id>Q9UHG0</id>
    </interactant>
    <interactant intactId="EBI-1043191">
        <id>Q9BYQ3</id>
        <label>KRTAP9-3</label>
    </interactant>
    <organismsDiffer>false</organismsDiffer>
    <experiments>3</experiments>
</comment>
<comment type="interaction">
    <interactant intactId="EBI-10303987">
        <id>Q9UHG0</id>
    </interactant>
    <interactant intactId="EBI-11742507">
        <id>Q8TAP4-4</id>
        <label>LMO3</label>
    </interactant>
    <organismsDiffer>false</organismsDiffer>
    <experiments>3</experiments>
</comment>
<comment type="interaction">
    <interactant intactId="EBI-10303987">
        <id>Q9UHG0</id>
    </interactant>
    <interactant intactId="EBI-739561">
        <id>Q9BQP7</id>
        <label>MGME1</label>
    </interactant>
    <organismsDiffer>false</organismsDiffer>
    <experiments>3</experiments>
</comment>
<comment type="interaction">
    <interactant intactId="EBI-10303987">
        <id>Q9UHG0</id>
    </interactant>
    <interactant intactId="EBI-2555563">
        <id>Q8IY33</id>
        <label>MICALL2</label>
    </interactant>
    <organismsDiffer>false</organismsDiffer>
    <experiments>3</experiments>
</comment>
<comment type="interaction">
    <interactant intactId="EBI-10303987">
        <id>Q9UHG0</id>
    </interactant>
    <interactant intactId="EBI-995714">
        <id>Q9Y605</id>
        <label>MRFAP1</label>
    </interactant>
    <organismsDiffer>false</organismsDiffer>
    <experiments>3</experiments>
</comment>
<comment type="interaction">
    <interactant intactId="EBI-10303987">
        <id>Q9UHG0</id>
    </interactant>
    <interactant intactId="EBI-709754">
        <id>Q9HB07</id>
        <label>MYG1</label>
    </interactant>
    <organismsDiffer>false</organismsDiffer>
    <experiments>3</experiments>
</comment>
<comment type="interaction">
    <interactant intactId="EBI-10303987">
        <id>Q9UHG0</id>
    </interactant>
    <interactant intactId="EBI-740897">
        <id>Q9GZT8</id>
        <label>NIF3L1</label>
    </interactant>
    <organismsDiffer>false</organismsDiffer>
    <experiments>3</experiments>
</comment>
<comment type="interaction">
    <interactant intactId="EBI-10303987">
        <id>Q9UHG0</id>
    </interactant>
    <interactant intactId="EBI-10210351">
        <id>P48645</id>
        <label>NMU</label>
    </interactant>
    <organismsDiffer>false</organismsDiffer>
    <experiments>3</experiments>
</comment>
<comment type="interaction">
    <interactant intactId="EBI-10303987">
        <id>Q9UHG0</id>
    </interactant>
    <interactant intactId="EBI-1762651">
        <id>P01178</id>
        <label>OXT</label>
    </interactant>
    <organismsDiffer>false</organismsDiffer>
    <experiments>3</experiments>
</comment>
<comment type="interaction">
    <interactant intactId="EBI-10303987">
        <id>Q9UHG0</id>
    </interactant>
    <interactant intactId="EBI-366525">
        <id>Q969H6</id>
        <label>POP5</label>
    </interactant>
    <organismsDiffer>false</organismsDiffer>
    <experiments>3</experiments>
</comment>
<comment type="interaction">
    <interactant intactId="EBI-10303987">
        <id>Q9UHG0</id>
    </interactant>
    <interactant intactId="EBI-722217">
        <id>Q14761</id>
        <label>PTPRCAP</label>
    </interactant>
    <organismsDiffer>false</organismsDiffer>
    <experiments>3</experiments>
</comment>
<comment type="interaction">
    <interactant intactId="EBI-10303987">
        <id>Q9UHG0</id>
    </interactant>
    <interactant intactId="EBI-723083">
        <id>Q96QD8</id>
        <label>SLC38A2</label>
    </interactant>
    <organismsDiffer>false</organismsDiffer>
    <experiments>3</experiments>
</comment>
<comment type="interaction">
    <interactant intactId="EBI-10303987">
        <id>Q9UHG0</id>
    </interactant>
    <interactant intactId="EBI-74615">
        <id>Q9H0E2</id>
        <label>TOLLIP</label>
    </interactant>
    <organismsDiffer>false</organismsDiffer>
    <experiments>3</experiments>
</comment>
<comment type="interaction">
    <interactant intactId="EBI-10303987">
        <id>Q9UHG0</id>
    </interactant>
    <interactant intactId="EBI-2515608">
        <id>Q7Z4G4</id>
        <label>TRMT11</label>
    </interactant>
    <organismsDiffer>false</organismsDiffer>
    <experiments>3</experiments>
</comment>
<comment type="interaction">
    <interactant intactId="EBI-10303987">
        <id>Q9UHG0</id>
    </interactant>
    <interactant intactId="EBI-12121104">
        <id>O94892</id>
        <label>ZNF432</label>
    </interactant>
    <organismsDiffer>false</organismsDiffer>
    <experiments>3</experiments>
</comment>
<comment type="subcellular location">
    <subcellularLocation>
        <location evidence="9 10">Cell projection</location>
        <location evidence="9 10">Cilium</location>
    </subcellularLocation>
    <subcellularLocation>
        <location evidence="8 10">Cytoplasm</location>
        <location evidence="8 10">Cytoskeleton</location>
        <location evidence="8 10">Cilium axoneme</location>
    </subcellularLocation>
    <subcellularLocation>
        <location evidence="1">Cell projection</location>
        <location evidence="1">Kinocilium</location>
    </subcellularLocation>
    <subcellularLocation>
        <location evidence="1">Cytoplasm</location>
        <location evidence="1">Cytoskeleton</location>
    </subcellularLocation>
    <text evidence="8">Localizes to the ciliary axoneme and to mitotic spindle fibers in a cell-cycle-dependent manner.</text>
</comment>
<comment type="alternative products">
    <event type="alternative splicing"/>
    <isoform>
        <id>Q9UHG0-1</id>
        <name>1</name>
        <sequence type="displayed"/>
    </isoform>
    <isoform>
        <id>Q9UHG0-2</id>
        <name>2</name>
        <sequence type="described" ref="VSP_014670 VSP_014671"/>
    </isoform>
</comment>
<comment type="tissue specificity">
    <text evidence="5 7 10">Ubiquitously expressed. In brain, highly expressed in the entorhinal cortex, inferior temporal cortex, medial temporal cortex, hypothalamus, amygdala and hippocampus (PubMed:10601354, PubMed:16278297). Expressed in liver by cholangiocytes, the epithelial cells of the bile ducts (at protein level) (PubMed:27319779).</text>
</comment>
<comment type="disease" evidence="7">
    <disease id="DI-01511">
        <name>Dyslexia 2</name>
        <acronym>DYX2</acronym>
        <description>A relatively common, complex cognitive disorder characterized by an impairment of reading performance despite adequate motivational, educational and intellectual opportunities. It is a multifactorial trait, with evidence for familial clustering and heritability.</description>
        <dbReference type="MIM" id="600202"/>
    </disease>
    <text>Disease susceptibility is associated with variants affecting the gene represented in this entry.</text>
</comment>
<comment type="disease" evidence="8">
    <disease id="DI-04336">
        <name>Nephronophthisis 19</name>
        <acronym>NPHP19</acronym>
        <description>A form of nephronophthisis, an autosomal recessive disorder characterized by chronic tubulointerstitial nephritis resulting in end-stage renal disease. NPHP19 patients also manifest hepatosplenomegaly, hepatic fibrosis, destruction of the bile ducts, focal bile ductal proliferation, ductal plate malformation, and cholestasis.</description>
        <dbReference type="MIM" id="616217"/>
    </disease>
    <text>The disease is caused by variants affecting the gene represented in this entry.</text>
</comment>
<comment type="disease" evidence="9">
    <disease id="DI-04549">
        <name>Deafness, autosomal recessive, 66</name>
        <acronym>DFNB66</acronym>
        <description>A form of non-syndromic sensorineural hearing loss. Sensorineural deafness results from damage to the neural receptors of the inner ear, the nerve pathways to the brain, or the area of the brain that receives sound information.</description>
        <dbReference type="MIM" id="610212"/>
    </disease>
    <text>The disease is caused by variants affecting the gene represented in this entry.</text>
</comment>
<comment type="disease" evidence="10 11">
    <disease id="DI-04970">
        <name>Sclerosing cholangitis, neonatal</name>
        <acronym>NSC</acronym>
        <description>An autosomal recessive form of liver disease with onset in infancy. Affected infants have jaundice, cholestasis, acholic stools, and progressive liver dysfunction resulting in fibrosis and cirrhosis. Cholangiography shows patent biliary ducts, but there are bile duct irregularities.</description>
        <dbReference type="MIM" id="617394"/>
    </disease>
    <text>The disease is caused by variants affecting the gene represented in this entry.</text>
</comment>
<comment type="sequence caution" evidence="13">
    <conflict type="erroneous initiation">
        <sequence resource="EMBL-CDS" id="CAB61371"/>
    </conflict>
    <text>Extended N-terminus.</text>
</comment>
<proteinExistence type="evidence at protein level"/>
<name>DCDC2_HUMAN</name>
<dbReference type="EMBL" id="AF181720">
    <property type="protein sequence ID" value="AAF23610.1"/>
    <property type="molecule type" value="Genomic_DNA"/>
</dbReference>
<dbReference type="EMBL" id="AF181721">
    <property type="protein sequence ID" value="AAF23612.1"/>
    <property type="molecule type" value="mRNA"/>
</dbReference>
<dbReference type="EMBL" id="AB032980">
    <property type="protein sequence ID" value="BAA86468.2"/>
    <property type="molecule type" value="mRNA"/>
</dbReference>
<dbReference type="EMBL" id="AL133043">
    <property type="protein sequence ID" value="CAB61371.1"/>
    <property type="status" value="ALT_INIT"/>
    <property type="molecule type" value="mRNA"/>
</dbReference>
<dbReference type="EMBL" id="AL359389">
    <property type="status" value="NOT_ANNOTATED_CDS"/>
    <property type="molecule type" value="Genomic_DNA"/>
</dbReference>
<dbReference type="EMBL" id="AL359713">
    <property type="status" value="NOT_ANNOTATED_CDS"/>
    <property type="molecule type" value="Genomic_DNA"/>
</dbReference>
<dbReference type="EMBL" id="FO393410">
    <property type="status" value="NOT_ANNOTATED_CDS"/>
    <property type="molecule type" value="Genomic_DNA"/>
</dbReference>
<dbReference type="EMBL" id="BC050704">
    <property type="protein sequence ID" value="AAH50704.1"/>
    <property type="molecule type" value="mRNA"/>
</dbReference>
<dbReference type="CCDS" id="CCDS4550.1">
    <molecule id="Q9UHG0-1"/>
</dbReference>
<dbReference type="PIR" id="T42643">
    <property type="entry name" value="T42643"/>
</dbReference>
<dbReference type="RefSeq" id="NP_001182539.1">
    <molecule id="Q9UHG0-1"/>
    <property type="nucleotide sequence ID" value="NM_001195610.2"/>
</dbReference>
<dbReference type="RefSeq" id="NP_057440.2">
    <molecule id="Q9UHG0-1"/>
    <property type="nucleotide sequence ID" value="NM_016356.5"/>
</dbReference>
<dbReference type="PDB" id="2DNF">
    <property type="method" value="NMR"/>
    <property type="chains" value="A=132-226"/>
</dbReference>
<dbReference type="PDBsum" id="2DNF"/>
<dbReference type="SMR" id="Q9UHG0"/>
<dbReference type="BioGRID" id="119558">
    <property type="interactions" value="30"/>
</dbReference>
<dbReference type="CORUM" id="Q9UHG0"/>
<dbReference type="FunCoup" id="Q9UHG0">
    <property type="interactions" value="217"/>
</dbReference>
<dbReference type="IntAct" id="Q9UHG0">
    <property type="interactions" value="31"/>
</dbReference>
<dbReference type="STRING" id="9606.ENSP00000367715"/>
<dbReference type="iPTMnet" id="Q9UHG0"/>
<dbReference type="PhosphoSitePlus" id="Q9UHG0"/>
<dbReference type="BioMuta" id="DCDC2"/>
<dbReference type="DMDM" id="147744557"/>
<dbReference type="jPOST" id="Q9UHG0"/>
<dbReference type="MassIVE" id="Q9UHG0"/>
<dbReference type="PaxDb" id="9606-ENSP00000367715"/>
<dbReference type="PeptideAtlas" id="Q9UHG0"/>
<dbReference type="ProteomicsDB" id="84347">
    <molecule id="Q9UHG0-1"/>
</dbReference>
<dbReference type="ProteomicsDB" id="84348">
    <molecule id="Q9UHG0-2"/>
</dbReference>
<dbReference type="Antibodypedia" id="25259">
    <property type="antibodies" value="249 antibodies from 27 providers"/>
</dbReference>
<dbReference type="DNASU" id="51473"/>
<dbReference type="Ensembl" id="ENST00000378450.6">
    <molecule id="Q9UHG0-2"/>
    <property type="protein sequence ID" value="ENSP00000367711.3"/>
    <property type="gene ID" value="ENSG00000146038.12"/>
</dbReference>
<dbReference type="Ensembl" id="ENST00000378454.8">
    <molecule id="Q9UHG0-1"/>
    <property type="protein sequence ID" value="ENSP00000367715.3"/>
    <property type="gene ID" value="ENSG00000146038.12"/>
</dbReference>
<dbReference type="GeneID" id="51473"/>
<dbReference type="KEGG" id="hsa:51473"/>
<dbReference type="MANE-Select" id="ENST00000378454.8">
    <property type="protein sequence ID" value="ENSP00000367715.3"/>
    <property type="RefSeq nucleotide sequence ID" value="NM_016356.5"/>
    <property type="RefSeq protein sequence ID" value="NP_057440.2"/>
</dbReference>
<dbReference type="UCSC" id="uc003ndx.4">
    <molecule id="Q9UHG0-1"/>
    <property type="organism name" value="human"/>
</dbReference>
<dbReference type="AGR" id="HGNC:18141"/>
<dbReference type="CTD" id="51473"/>
<dbReference type="DisGeNET" id="51473"/>
<dbReference type="GeneCards" id="DCDC2"/>
<dbReference type="GeneReviews" id="DCDC2"/>
<dbReference type="HGNC" id="HGNC:18141">
    <property type="gene designation" value="DCDC2"/>
</dbReference>
<dbReference type="HPA" id="ENSG00000146038">
    <property type="expression patterns" value="Tissue enhanced (choroid plexus, kidney, pancreas)"/>
</dbReference>
<dbReference type="MalaCards" id="DCDC2"/>
<dbReference type="MIM" id="600202">
    <property type="type" value="phenotype"/>
</dbReference>
<dbReference type="MIM" id="605755">
    <property type="type" value="gene"/>
</dbReference>
<dbReference type="MIM" id="610212">
    <property type="type" value="phenotype"/>
</dbReference>
<dbReference type="MIM" id="616217">
    <property type="type" value="phenotype"/>
</dbReference>
<dbReference type="MIM" id="617394">
    <property type="type" value="phenotype"/>
</dbReference>
<dbReference type="neXtProt" id="NX_Q9UHG0"/>
<dbReference type="OpenTargets" id="ENSG00000146038"/>
<dbReference type="Orphanet" id="480556">
    <property type="disease" value="Isolated neonatal sclerosing cholangitis"/>
</dbReference>
<dbReference type="Orphanet" id="90636">
    <property type="disease" value="Rare autosomal recessive non-syndromic sensorineural deafness type DFNB"/>
</dbReference>
<dbReference type="Orphanet" id="84081">
    <property type="disease" value="Senior-Boichis syndrome"/>
</dbReference>
<dbReference type="PharmGKB" id="PA134978716"/>
<dbReference type="VEuPathDB" id="HostDB:ENSG00000146038"/>
<dbReference type="eggNOG" id="KOG3757">
    <property type="taxonomic scope" value="Eukaryota"/>
</dbReference>
<dbReference type="GeneTree" id="ENSGT00940000159377"/>
<dbReference type="HOGENOM" id="CLU_105460_0_0_1"/>
<dbReference type="InParanoid" id="Q9UHG0"/>
<dbReference type="OMA" id="MHSRINV"/>
<dbReference type="OrthoDB" id="1738954at2759"/>
<dbReference type="PAN-GO" id="Q9UHG0">
    <property type="GO annotations" value="8 GO annotations based on evolutionary models"/>
</dbReference>
<dbReference type="PhylomeDB" id="Q9UHG0"/>
<dbReference type="TreeFam" id="TF338406"/>
<dbReference type="PathwayCommons" id="Q9UHG0"/>
<dbReference type="SignaLink" id="Q9UHG0"/>
<dbReference type="SIGNOR" id="Q9UHG0"/>
<dbReference type="BioGRID-ORCS" id="51473">
    <property type="hits" value="7 hits in 1141 CRISPR screens"/>
</dbReference>
<dbReference type="ChiTaRS" id="DCDC2">
    <property type="organism name" value="human"/>
</dbReference>
<dbReference type="EvolutionaryTrace" id="Q9UHG0"/>
<dbReference type="GeneWiki" id="DCDC2"/>
<dbReference type="GenomeRNAi" id="51473"/>
<dbReference type="Pharos" id="Q9UHG0">
    <property type="development level" value="Tbio"/>
</dbReference>
<dbReference type="PRO" id="PR:Q9UHG0"/>
<dbReference type="Proteomes" id="UP000005640">
    <property type="component" value="Chromosome 6"/>
</dbReference>
<dbReference type="RNAct" id="Q9UHG0">
    <property type="molecule type" value="protein"/>
</dbReference>
<dbReference type="Bgee" id="ENSG00000146038">
    <property type="expression patterns" value="Expressed in secondary oocyte and 117 other cell types or tissues"/>
</dbReference>
<dbReference type="ExpressionAtlas" id="Q9UHG0">
    <property type="expression patterns" value="baseline and differential"/>
</dbReference>
<dbReference type="GO" id="GO:0005930">
    <property type="term" value="C:axoneme"/>
    <property type="evidence" value="ECO:0000314"/>
    <property type="project" value="UniProtKB"/>
</dbReference>
<dbReference type="GO" id="GO:0005929">
    <property type="term" value="C:cilium"/>
    <property type="evidence" value="ECO:0000314"/>
    <property type="project" value="UniProtKB"/>
</dbReference>
<dbReference type="GO" id="GO:0005737">
    <property type="term" value="C:cytoplasm"/>
    <property type="evidence" value="ECO:0000314"/>
    <property type="project" value="UniProtKB"/>
</dbReference>
<dbReference type="GO" id="GO:0060091">
    <property type="term" value="C:kinocilium"/>
    <property type="evidence" value="ECO:0000250"/>
    <property type="project" value="UniProtKB"/>
</dbReference>
<dbReference type="GO" id="GO:0005874">
    <property type="term" value="C:microtubule"/>
    <property type="evidence" value="ECO:0000318"/>
    <property type="project" value="GO_Central"/>
</dbReference>
<dbReference type="GO" id="GO:0005815">
    <property type="term" value="C:microtubule organizing center"/>
    <property type="evidence" value="ECO:0000318"/>
    <property type="project" value="GO_Central"/>
</dbReference>
<dbReference type="GO" id="GO:0019894">
    <property type="term" value="F:kinesin binding"/>
    <property type="evidence" value="ECO:0007669"/>
    <property type="project" value="Ensembl"/>
</dbReference>
<dbReference type="GO" id="GO:0006968">
    <property type="term" value="P:cellular defense response"/>
    <property type="evidence" value="ECO:0000304"/>
    <property type="project" value="ProtInc"/>
</dbReference>
<dbReference type="GO" id="GO:0060271">
    <property type="term" value="P:cilium assembly"/>
    <property type="evidence" value="ECO:0000315"/>
    <property type="project" value="UniProtKB"/>
</dbReference>
<dbReference type="GO" id="GO:0048813">
    <property type="term" value="P:dendrite morphogenesis"/>
    <property type="evidence" value="ECO:0000318"/>
    <property type="project" value="GO_Central"/>
</dbReference>
<dbReference type="GO" id="GO:0035556">
    <property type="term" value="P:intracellular signal transduction"/>
    <property type="evidence" value="ECO:0007669"/>
    <property type="project" value="InterPro"/>
</dbReference>
<dbReference type="GO" id="GO:0001764">
    <property type="term" value="P:neuron migration"/>
    <property type="evidence" value="ECO:0000250"/>
    <property type="project" value="UniProtKB"/>
</dbReference>
<dbReference type="GO" id="GO:0045880">
    <property type="term" value="P:positive regulation of smoothened signaling pathway"/>
    <property type="evidence" value="ECO:0000315"/>
    <property type="project" value="GO_Central"/>
</dbReference>
<dbReference type="GO" id="GO:1902017">
    <property type="term" value="P:regulation of cilium assembly"/>
    <property type="evidence" value="ECO:0000315"/>
    <property type="project" value="UniProtKB"/>
</dbReference>
<dbReference type="GO" id="GO:0030111">
    <property type="term" value="P:regulation of Wnt signaling pathway"/>
    <property type="evidence" value="ECO:0000315"/>
    <property type="project" value="UniProtKB"/>
</dbReference>
<dbReference type="GO" id="GO:0007605">
    <property type="term" value="P:sensory perception of sound"/>
    <property type="evidence" value="ECO:0000315"/>
    <property type="project" value="UniProtKB"/>
</dbReference>
<dbReference type="CDD" id="cd17149">
    <property type="entry name" value="DCX1_DCDC2"/>
    <property type="match status" value="1"/>
</dbReference>
<dbReference type="CDD" id="cd17152">
    <property type="entry name" value="DCX2_DCDC2"/>
    <property type="match status" value="1"/>
</dbReference>
<dbReference type="FunFam" id="3.10.20.230:FF:000004">
    <property type="entry name" value="Doublecortin domain containing 2"/>
    <property type="match status" value="1"/>
</dbReference>
<dbReference type="FunFam" id="3.10.20.230:FF:000005">
    <property type="entry name" value="Doublecortin domain containing 2"/>
    <property type="match status" value="1"/>
</dbReference>
<dbReference type="Gene3D" id="3.10.20.230">
    <property type="entry name" value="Doublecortin domain"/>
    <property type="match status" value="2"/>
</dbReference>
<dbReference type="InterPro" id="IPR033036">
    <property type="entry name" value="DCDC2_DCX_dom2"/>
</dbReference>
<dbReference type="InterPro" id="IPR003533">
    <property type="entry name" value="Doublecortin_dom"/>
</dbReference>
<dbReference type="InterPro" id="IPR036572">
    <property type="entry name" value="Doublecortin_dom_sf"/>
</dbReference>
<dbReference type="PANTHER" id="PTHR23004">
    <property type="entry name" value="DOUBLECORTIN DOMAIN CONTAINING 2"/>
    <property type="match status" value="1"/>
</dbReference>
<dbReference type="PANTHER" id="PTHR23004:SF5">
    <property type="entry name" value="DOUBLECORTIN DOMAIN-CONTAINING PROTEIN 2"/>
    <property type="match status" value="1"/>
</dbReference>
<dbReference type="Pfam" id="PF03607">
    <property type="entry name" value="DCX"/>
    <property type="match status" value="2"/>
</dbReference>
<dbReference type="SMART" id="SM00537">
    <property type="entry name" value="DCX"/>
    <property type="match status" value="2"/>
</dbReference>
<dbReference type="SUPFAM" id="SSF89837">
    <property type="entry name" value="Doublecortin (DC)"/>
    <property type="match status" value="2"/>
</dbReference>
<dbReference type="PROSITE" id="PS50309">
    <property type="entry name" value="DC"/>
    <property type="match status" value="2"/>
</dbReference>
<organism>
    <name type="scientific">Homo sapiens</name>
    <name type="common">Human</name>
    <dbReference type="NCBI Taxonomy" id="9606"/>
    <lineage>
        <taxon>Eukaryota</taxon>
        <taxon>Metazoa</taxon>
        <taxon>Chordata</taxon>
        <taxon>Craniata</taxon>
        <taxon>Vertebrata</taxon>
        <taxon>Euteleostomi</taxon>
        <taxon>Mammalia</taxon>
        <taxon>Eutheria</taxon>
        <taxon>Euarchontoglires</taxon>
        <taxon>Primates</taxon>
        <taxon>Haplorrhini</taxon>
        <taxon>Catarrhini</taxon>
        <taxon>Hominidae</taxon>
        <taxon>Homo</taxon>
    </lineage>
</organism>
<reference key="1">
    <citation type="journal article" date="1999" name="J. Exp. Med.">
        <title>A new antigen recognized by cytolytic T lymphocytes on a human kidney tumor results from reverse strand transcription.</title>
        <authorList>
            <person name="Van den Eynde B.J."/>
            <person name="Gaugler B."/>
            <person name="Probst-Kepper M."/>
            <person name="Michaux L."/>
            <person name="Devuyst O."/>
            <person name="Lorge F."/>
            <person name="Weynants P."/>
            <person name="Boon T."/>
        </authorList>
    </citation>
    <scope>NUCLEOTIDE SEQUENCE [MRNA] (ISOFORM 1)</scope>
    <scope>TISSUE SPECIFICITY</scope>
    <scope>VARIANT GLY-221</scope>
</reference>
<reference key="2">
    <citation type="journal article" date="1999" name="DNA Res.">
        <title>Characterization of cDNA clones selected by the GeneMark analysis from size-fractionated cDNA libraries from human brain.</title>
        <authorList>
            <person name="Hirosawa M."/>
            <person name="Nagase T."/>
            <person name="Ishikawa K."/>
            <person name="Kikuno R."/>
            <person name="Nomura N."/>
            <person name="Ohara O."/>
        </authorList>
    </citation>
    <scope>NUCLEOTIDE SEQUENCE [LARGE SCALE MRNA] (ISOFORM 1)</scope>
    <scope>VARIANT GLY-221</scope>
    <source>
        <tissue>Brain</tissue>
    </source>
</reference>
<reference key="3">
    <citation type="journal article" date="2002" name="DNA Res.">
        <title>Construction of expression-ready cDNA clones for KIAA genes: manual curation of 330 KIAA cDNA clones.</title>
        <authorList>
            <person name="Nakajima D."/>
            <person name="Okazaki N."/>
            <person name="Yamakawa H."/>
            <person name="Kikuno R."/>
            <person name="Ohara O."/>
            <person name="Nagase T."/>
        </authorList>
    </citation>
    <scope>SEQUENCE REVISION</scope>
</reference>
<reference key="4">
    <citation type="journal article" date="2007" name="BMC Genomics">
        <title>The full-ORF clone resource of the German cDNA consortium.</title>
        <authorList>
            <person name="Bechtel S."/>
            <person name="Rosenfelder H."/>
            <person name="Duda A."/>
            <person name="Schmidt C.P."/>
            <person name="Ernst U."/>
            <person name="Wellenreuther R."/>
            <person name="Mehrle A."/>
            <person name="Schuster C."/>
            <person name="Bahr A."/>
            <person name="Bloecker H."/>
            <person name="Heubner D."/>
            <person name="Hoerlein A."/>
            <person name="Michel G."/>
            <person name="Wedler H."/>
            <person name="Koehrer K."/>
            <person name="Ottenwaelder B."/>
            <person name="Poustka A."/>
            <person name="Wiemann S."/>
            <person name="Schupp I."/>
        </authorList>
    </citation>
    <scope>NUCLEOTIDE SEQUENCE [LARGE SCALE MRNA] (ISOFORM 2)</scope>
    <source>
        <tissue>Fetal brain</tissue>
    </source>
</reference>
<reference key="5">
    <citation type="journal article" date="2003" name="Nature">
        <title>The DNA sequence and analysis of human chromosome 6.</title>
        <authorList>
            <person name="Mungall A.J."/>
            <person name="Palmer S.A."/>
            <person name="Sims S.K."/>
            <person name="Edwards C.A."/>
            <person name="Ashurst J.L."/>
            <person name="Wilming L."/>
            <person name="Jones M.C."/>
            <person name="Horton R."/>
            <person name="Hunt S.E."/>
            <person name="Scott C.E."/>
            <person name="Gilbert J.G.R."/>
            <person name="Clamp M.E."/>
            <person name="Bethel G."/>
            <person name="Milne S."/>
            <person name="Ainscough R."/>
            <person name="Almeida J.P."/>
            <person name="Ambrose K.D."/>
            <person name="Andrews T.D."/>
            <person name="Ashwell R.I.S."/>
            <person name="Babbage A.K."/>
            <person name="Bagguley C.L."/>
            <person name="Bailey J."/>
            <person name="Banerjee R."/>
            <person name="Barker D.J."/>
            <person name="Barlow K.F."/>
            <person name="Bates K."/>
            <person name="Beare D.M."/>
            <person name="Beasley H."/>
            <person name="Beasley O."/>
            <person name="Bird C.P."/>
            <person name="Blakey S.E."/>
            <person name="Bray-Allen S."/>
            <person name="Brook J."/>
            <person name="Brown A.J."/>
            <person name="Brown J.Y."/>
            <person name="Burford D.C."/>
            <person name="Burrill W."/>
            <person name="Burton J."/>
            <person name="Carder C."/>
            <person name="Carter N.P."/>
            <person name="Chapman J.C."/>
            <person name="Clark S.Y."/>
            <person name="Clark G."/>
            <person name="Clee C.M."/>
            <person name="Clegg S."/>
            <person name="Cobley V."/>
            <person name="Collier R.E."/>
            <person name="Collins J.E."/>
            <person name="Colman L.K."/>
            <person name="Corby N.R."/>
            <person name="Coville G.J."/>
            <person name="Culley K.M."/>
            <person name="Dhami P."/>
            <person name="Davies J."/>
            <person name="Dunn M."/>
            <person name="Earthrowl M.E."/>
            <person name="Ellington A.E."/>
            <person name="Evans K.A."/>
            <person name="Faulkner L."/>
            <person name="Francis M.D."/>
            <person name="Frankish A."/>
            <person name="Frankland J."/>
            <person name="French L."/>
            <person name="Garner P."/>
            <person name="Garnett J."/>
            <person name="Ghori M.J."/>
            <person name="Gilby L.M."/>
            <person name="Gillson C.J."/>
            <person name="Glithero R.J."/>
            <person name="Grafham D.V."/>
            <person name="Grant M."/>
            <person name="Gribble S."/>
            <person name="Griffiths C."/>
            <person name="Griffiths M.N.D."/>
            <person name="Hall R."/>
            <person name="Halls K.S."/>
            <person name="Hammond S."/>
            <person name="Harley J.L."/>
            <person name="Hart E.A."/>
            <person name="Heath P.D."/>
            <person name="Heathcott R."/>
            <person name="Holmes S.J."/>
            <person name="Howden P.J."/>
            <person name="Howe K.L."/>
            <person name="Howell G.R."/>
            <person name="Huckle E."/>
            <person name="Humphray S.J."/>
            <person name="Humphries M.D."/>
            <person name="Hunt A.R."/>
            <person name="Johnson C.M."/>
            <person name="Joy A.A."/>
            <person name="Kay M."/>
            <person name="Keenan S.J."/>
            <person name="Kimberley A.M."/>
            <person name="King A."/>
            <person name="Laird G.K."/>
            <person name="Langford C."/>
            <person name="Lawlor S."/>
            <person name="Leongamornlert D.A."/>
            <person name="Leversha M."/>
            <person name="Lloyd C.R."/>
            <person name="Lloyd D.M."/>
            <person name="Loveland J.E."/>
            <person name="Lovell J."/>
            <person name="Martin S."/>
            <person name="Mashreghi-Mohammadi M."/>
            <person name="Maslen G.L."/>
            <person name="Matthews L."/>
            <person name="McCann O.T."/>
            <person name="McLaren S.J."/>
            <person name="McLay K."/>
            <person name="McMurray A."/>
            <person name="Moore M.J.F."/>
            <person name="Mullikin J.C."/>
            <person name="Niblett D."/>
            <person name="Nickerson T."/>
            <person name="Novik K.L."/>
            <person name="Oliver K."/>
            <person name="Overton-Larty E.K."/>
            <person name="Parker A."/>
            <person name="Patel R."/>
            <person name="Pearce A.V."/>
            <person name="Peck A.I."/>
            <person name="Phillimore B.J.C.T."/>
            <person name="Phillips S."/>
            <person name="Plumb R.W."/>
            <person name="Porter K.M."/>
            <person name="Ramsey Y."/>
            <person name="Ranby S.A."/>
            <person name="Rice C.M."/>
            <person name="Ross M.T."/>
            <person name="Searle S.M."/>
            <person name="Sehra H.K."/>
            <person name="Sheridan E."/>
            <person name="Skuce C.D."/>
            <person name="Smith S."/>
            <person name="Smith M."/>
            <person name="Spraggon L."/>
            <person name="Squares S.L."/>
            <person name="Steward C.A."/>
            <person name="Sycamore N."/>
            <person name="Tamlyn-Hall G."/>
            <person name="Tester J."/>
            <person name="Theaker A.J."/>
            <person name="Thomas D.W."/>
            <person name="Thorpe A."/>
            <person name="Tracey A."/>
            <person name="Tromans A."/>
            <person name="Tubby B."/>
            <person name="Wall M."/>
            <person name="Wallis J.M."/>
            <person name="West A.P."/>
            <person name="White S.S."/>
            <person name="Whitehead S.L."/>
            <person name="Whittaker H."/>
            <person name="Wild A."/>
            <person name="Willey D.J."/>
            <person name="Wilmer T.E."/>
            <person name="Wood J.M."/>
            <person name="Wray P.W."/>
            <person name="Wyatt J.C."/>
            <person name="Young L."/>
            <person name="Younger R.M."/>
            <person name="Bentley D.R."/>
            <person name="Coulson A."/>
            <person name="Durbin R.M."/>
            <person name="Hubbard T."/>
            <person name="Sulston J.E."/>
            <person name="Dunham I."/>
            <person name="Rogers J."/>
            <person name="Beck S."/>
        </authorList>
    </citation>
    <scope>NUCLEOTIDE SEQUENCE [LARGE SCALE GENOMIC DNA]</scope>
</reference>
<reference key="6">
    <citation type="journal article" date="2004" name="Genome Res.">
        <title>The status, quality, and expansion of the NIH full-length cDNA project: the Mammalian Gene Collection (MGC).</title>
        <authorList>
            <consortium name="The MGC Project Team"/>
        </authorList>
    </citation>
    <scope>NUCLEOTIDE SEQUENCE [LARGE SCALE MRNA] (ISOFORM 1)</scope>
    <scope>VARIANT GLY-221</scope>
    <source>
        <tissue>Colon</tissue>
    </source>
</reference>
<reference key="7">
    <citation type="journal article" date="2005" name="Proc. Natl. Acad. Sci. U.S.A.">
        <title>DCDC2 is associated with reading disability and modulates neuronal development in the brain.</title>
        <authorList>
            <person name="Meng H."/>
            <person name="Smith S.D."/>
            <person name="Hager K."/>
            <person name="Held M."/>
            <person name="Liu J."/>
            <person name="Olson R.K."/>
            <person name="Pennington B.F."/>
            <person name="DeFries J.C."/>
            <person name="Gelernter J."/>
            <person name="O'Reilly-Pol T."/>
            <person name="Somlo S."/>
            <person name="Skudlarski P."/>
            <person name="Shaywitz S.E."/>
            <person name="Shaywitz B.A."/>
            <person name="Marchione K."/>
            <person name="Wang Y."/>
            <person name="Paramasivam M."/>
            <person name="LoTurco J.J."/>
            <person name="Page G.P."/>
            <person name="Gruen J.R."/>
        </authorList>
    </citation>
    <scope>INVOLVEMENT IN DYX2</scope>
    <scope>TISSUE SPECIFICITY</scope>
</reference>
<reference key="8">
    <citation type="journal article" date="2015" name="Am. J. Hum. Genet.">
        <title>DCDC2 mutations cause a renal-hepatic ciliopathy by disrupting Wnt signaling.</title>
        <authorList>
            <person name="Schueler M."/>
            <person name="Braun D.A."/>
            <person name="Chandrasekar G."/>
            <person name="Gee H.Y."/>
            <person name="Klasson T.D."/>
            <person name="Halbritter J."/>
            <person name="Bieder A."/>
            <person name="Porath J.D."/>
            <person name="Airik R."/>
            <person name="Zhou W."/>
            <person name="LoTurco J.J."/>
            <person name="Che A."/>
            <person name="Otto E.A."/>
            <person name="Boeckenhauer D."/>
            <person name="Sebire N.J."/>
            <person name="Honzik T."/>
            <person name="Harris P.C."/>
            <person name="Koon S.J."/>
            <person name="Gunay-Aygun M."/>
            <person name="Saunier S."/>
            <person name="Zerres K."/>
            <person name="Bruechle N.O."/>
            <person name="Drenth J.P."/>
            <person name="Pelletier L."/>
            <person name="Tapia-Paez I."/>
            <person name="Lifton R.P."/>
            <person name="Giles R.H."/>
            <person name="Kere J."/>
            <person name="Hildebrandt F."/>
        </authorList>
    </citation>
    <scope>FUNCTION</scope>
    <scope>SUBCELLULAR LOCATION</scope>
    <scope>INTERACTION WITH DVL1; DVL2 AND DVL3</scope>
    <scope>INVOLVEMENT IN NPHP19</scope>
</reference>
<reference key="9">
    <citation type="journal article" date="2015" name="Hum. Mol. Genet.">
        <title>A missense mutation in DCDC2 causes human recessive deafness DFNB66, likely by interfering with sensory hair cell and supporting cell cilia length regulation.</title>
        <authorList>
            <person name="Grati M."/>
            <person name="Chakchouk I."/>
            <person name="Ma Q."/>
            <person name="Bensaid M."/>
            <person name="Desmidt A."/>
            <person name="Turki N."/>
            <person name="Yan D."/>
            <person name="Baanannou A."/>
            <person name="Mittal R."/>
            <person name="Driss N."/>
            <person name="Blanton S."/>
            <person name="Farooq A."/>
            <person name="Lu Z."/>
            <person name="Liu X.Z."/>
            <person name="Masmoudi S."/>
        </authorList>
    </citation>
    <scope>FUNCTION</scope>
    <scope>SUBCELLULAR LOCATION</scope>
    <scope>INVOLVEMENT IN DFNB66</scope>
    <scope>VARIANT DFNB66 PRO-424</scope>
    <scope>CHARACTERIZATION OF VARIANT DFNB66 PRO-424</scope>
</reference>
<reference key="10">
    <citation type="journal article" date="2016" name="Hum. Mutat.">
        <title>DCDC2 mutations cause neonatal sclerosing cholangitis.</title>
        <authorList>
            <person name="Girard M."/>
            <person name="Bizet A.A."/>
            <person name="Lachaux A."/>
            <person name="Gonzales E."/>
            <person name="Filhol E."/>
            <person name="Collardeau-Frachon S."/>
            <person name="Jeanpierre C."/>
            <person name="Henry C."/>
            <person name="Fabre M."/>
            <person name="Viremouneix L."/>
            <person name="Galmiche L."/>
            <person name="Debray D."/>
            <person name="Bole-Feysot C."/>
            <person name="Nitschke P."/>
            <person name="Pariente D."/>
            <person name="Guettier C."/>
            <person name="Lyonnet S."/>
            <person name="Heidet L."/>
            <person name="Bertholet A."/>
            <person name="Jacquemin E."/>
            <person name="Henrion-Caude A."/>
            <person name="Saunier S."/>
        </authorList>
    </citation>
    <scope>INVOLVEMENT IN NSC</scope>
    <scope>VARIANT NSC ASN-17</scope>
    <scope>CHARACTERIZATION OF VARIANT NSC ASN-17</scope>
    <scope>FUNCTION</scope>
    <scope>SUBCELLULAR LOCATION</scope>
    <scope>TISSUE SPECIFICITY</scope>
</reference>
<reference key="11">
    <citation type="journal article" date="2016" name="J. Hepatol.">
        <title>Mutations in DCDC2 (doublecortin domain containing protein 2) in neonatal sclerosing cholangitis.</title>
        <authorList>
            <consortium name="University of Washington Center for Mendelian Genomics"/>
            <person name="Grammatikopoulos T."/>
            <person name="Sambrotta M."/>
            <person name="Strautnieks S."/>
            <person name="Foskett P."/>
            <person name="Knisely A.S."/>
            <person name="Wagner B."/>
            <person name="Deheragoda M."/>
            <person name="Starling C."/>
            <person name="Mieli-Vergani G."/>
            <person name="Smith J."/>
            <person name="Bull L."/>
            <person name="Thompson R.J."/>
        </authorList>
    </citation>
    <scope>INVOLVEMENT IN NSC</scope>
    <scope>VARIANTS NSC 217-LYS--ALA-476 DEL AND 297-LEU--ALA-476 DEL</scope>
</reference>
<reference key="12">
    <citation type="submission" date="2006-10" db="PDB data bank">
        <title>Solution structure of RSGI RUH-062, a DCX domain from human.</title>
        <authorList>
            <consortium name="RIKEN structural genomics initiative (RSGI)"/>
        </authorList>
    </citation>
    <scope>STRUCTURE BY NMR OF 132-226</scope>
</reference>
<sequence length="476" mass="52834">MSGSSARSSHLSQPVVKSVLVYRNGDPFYAGRRVVIHEKKVSSFEVFLKEVTGGVQAPFGAVRNIYTPRTGHRIRKLDQIQSGGNYVAGGQEAFKKLNYLDIGEIKKRPMEVVNTEVKPVIHSRINVSARFRKPLQEPCTIFLIANGDLINPASRLLIPRKTLNQWDHVLQMVTEKITLRSGAVHRLYTLEGKLVESGAELENGQFYVAVGRDKFKKLPYSELLFDKSTMRRPFGQKASSLPPIVGSRKSKGSGNDRHSKSTVGSSDNSSPQPLKRKGKKEDVNSEKLTKLKQNVKLKNSQETIPNSDEGIFKAGAERSETRGAAEVQEDEDTQVEVPVDQRPAEIVDEEEDGEKANKDAEQKEDFSGMNGDLEEEGGREATDAPEQVEEILDHSEQQARPARVNGGTDEENGEELQQVNNELQLVLDKERKSQGAGSGQDEADVDPQRPPRPEVKITSPEENENNQQNKDYAAVA</sequence>
<evidence type="ECO:0000250" key="1">
    <source>
        <dbReference type="UniProtKB" id="D3ZR10"/>
    </source>
</evidence>
<evidence type="ECO:0000255" key="2">
    <source>
        <dbReference type="PROSITE-ProRule" id="PRU00072"/>
    </source>
</evidence>
<evidence type="ECO:0000256" key="3">
    <source>
        <dbReference type="SAM" id="MobiDB-lite"/>
    </source>
</evidence>
<evidence type="ECO:0000269" key="4">
    <source>
    </source>
</evidence>
<evidence type="ECO:0000269" key="5">
    <source>
    </source>
</evidence>
<evidence type="ECO:0000269" key="6">
    <source>
    </source>
</evidence>
<evidence type="ECO:0000269" key="7">
    <source>
    </source>
</evidence>
<evidence type="ECO:0000269" key="8">
    <source>
    </source>
</evidence>
<evidence type="ECO:0000269" key="9">
    <source>
    </source>
</evidence>
<evidence type="ECO:0000269" key="10">
    <source>
    </source>
</evidence>
<evidence type="ECO:0000269" key="11">
    <source>
    </source>
</evidence>
<evidence type="ECO:0000303" key="12">
    <source>
    </source>
</evidence>
<evidence type="ECO:0000305" key="13"/>
<evidence type="ECO:0007829" key="14">
    <source>
        <dbReference type="PDB" id="2DNF"/>
    </source>
</evidence>
<feature type="chain" id="PRO_0000079804" description="Doublecortin domain-containing protein 2">
    <location>
        <begin position="1"/>
        <end position="476"/>
    </location>
</feature>
<feature type="domain" description="Doublecortin 1" evidence="2">
    <location>
        <begin position="17"/>
        <end position="100"/>
    </location>
</feature>
<feature type="domain" description="Doublecortin 2" evidence="2">
    <location>
        <begin position="139"/>
        <end position="221"/>
    </location>
</feature>
<feature type="region of interest" description="Disordered" evidence="3">
    <location>
        <begin position="234"/>
        <end position="476"/>
    </location>
</feature>
<feature type="compositionally biased region" description="Polar residues" evidence="3">
    <location>
        <begin position="261"/>
        <end position="272"/>
    </location>
</feature>
<feature type="compositionally biased region" description="Basic and acidic residues" evidence="3">
    <location>
        <begin position="279"/>
        <end position="289"/>
    </location>
</feature>
<feature type="compositionally biased region" description="Polar residues" evidence="3">
    <location>
        <begin position="296"/>
        <end position="306"/>
    </location>
</feature>
<feature type="compositionally biased region" description="Basic and acidic residues" evidence="3">
    <location>
        <begin position="354"/>
        <end position="366"/>
    </location>
</feature>
<feature type="compositionally biased region" description="Low complexity" evidence="3">
    <location>
        <begin position="415"/>
        <end position="426"/>
    </location>
</feature>
<feature type="compositionally biased region" description="Basic and acidic residues" evidence="3">
    <location>
        <begin position="446"/>
        <end position="455"/>
    </location>
</feature>
<feature type="modified residue" description="Phosphoserine" evidence="1">
    <location>
        <position position="270"/>
    </location>
</feature>
<feature type="splice variant" id="VSP_014670" description="In isoform 2." evidence="12">
    <location>
        <begin position="1"/>
        <end position="247"/>
    </location>
</feature>
<feature type="splice variant" id="VSP_014671" description="In isoform 2." evidence="12">
    <original>RKSKGSGNDRHSKSTVGSSDNSSPQPLKRKGKKEDVNSEKLTKLKQNVKLKNSQETIPNS</original>
    <variation>MKMWNNWGWCGGRRRGCTKILSTKKGIQMSIKNKHLIVIPAFSHTMSQLDFDFHCVFVSI</variation>
    <location>
        <begin position="248"/>
        <end position="307"/>
    </location>
</feature>
<feature type="sequence variant" id="VAR_077245" description="In NSC; loss of localization to the cilium axoneme; dbSNP:rs1042640142." evidence="10">
    <original>K</original>
    <variation>N</variation>
    <location>
        <position position="17"/>
    </location>
</feature>
<feature type="sequence variant" id="VAR_050946" description="In dbSNP:rs33914824.">
    <original>P</original>
    <variation>A</variation>
    <location>
        <position position="152"/>
    </location>
</feature>
<feature type="sequence variant" id="VAR_078767" description="In NSC." evidence="11">
    <location>
        <begin position="217"/>
        <end position="476"/>
    </location>
</feature>
<feature type="sequence variant" id="VAR_022890" description="In dbSNP:rs2274305." evidence="4 5 6">
    <original>S</original>
    <variation>G</variation>
    <location>
        <position position="221"/>
    </location>
</feature>
<feature type="sequence variant" id="VAR_078768" description="In NSC." evidence="11">
    <location>
        <begin position="297"/>
        <end position="476"/>
    </location>
</feature>
<feature type="sequence variant" id="VAR_074667" description="In DFNB66; results in ciliary abnormalities including increased ciliary length; dbSNP:rs794729665." evidence="9">
    <original>Q</original>
    <variation>P</variation>
    <location>
        <position position="424"/>
    </location>
</feature>
<feature type="sequence variant" id="VAR_050947" description="In dbSNP:rs9460973.">
    <original>K</original>
    <variation>N</variation>
    <location>
        <position position="456"/>
    </location>
</feature>
<feature type="sequence conflict" description="In Ref. 6; AAH50704." evidence="13" ref="6">
    <original>G</original>
    <variation>D</variation>
    <location>
        <position position="71"/>
    </location>
</feature>
<feature type="sequence conflict" description="In Ref. 4; CAB61371." evidence="13" ref="4">
    <original>N</original>
    <variation>K</variation>
    <location>
        <position position="370"/>
    </location>
</feature>
<feature type="sequence conflict" description="In Ref. 4; CAB61371." evidence="13" ref="4">
    <original>Q</original>
    <variation>R</variation>
    <location>
        <position position="424"/>
    </location>
</feature>
<feature type="strand" evidence="14">
    <location>
        <begin position="139"/>
        <end position="143"/>
    </location>
</feature>
<feature type="strand" evidence="14">
    <location>
        <begin position="149"/>
        <end position="151"/>
    </location>
</feature>
<feature type="strand" evidence="14">
    <location>
        <begin position="154"/>
        <end position="158"/>
    </location>
</feature>
<feature type="helix" evidence="14">
    <location>
        <begin position="160"/>
        <end position="163"/>
    </location>
</feature>
<feature type="helix" evidence="14">
    <location>
        <begin position="166"/>
        <end position="176"/>
    </location>
</feature>
<feature type="strand" evidence="14">
    <location>
        <begin position="186"/>
        <end position="189"/>
    </location>
</feature>
<feature type="strand" evidence="14">
    <location>
        <begin position="194"/>
        <end position="197"/>
    </location>
</feature>
<feature type="strand" evidence="14">
    <location>
        <begin position="206"/>
        <end position="210"/>
    </location>
</feature>
<feature type="helix" evidence="14">
    <location>
        <begin position="221"/>
        <end position="224"/>
    </location>
</feature>
<keyword id="KW-0002">3D-structure</keyword>
<keyword id="KW-0025">Alternative splicing</keyword>
<keyword id="KW-0966">Cell projection</keyword>
<keyword id="KW-1186">Ciliopathy</keyword>
<keyword id="KW-0970">Cilium biogenesis/degradation</keyword>
<keyword id="KW-0963">Cytoplasm</keyword>
<keyword id="KW-0206">Cytoskeleton</keyword>
<keyword id="KW-0209">Deafness</keyword>
<keyword id="KW-0225">Disease variant</keyword>
<keyword id="KW-0983">Nephronophthisis</keyword>
<keyword id="KW-0524">Neurogenesis</keyword>
<keyword id="KW-1010">Non-syndromic deafness</keyword>
<keyword id="KW-0597">Phosphoprotein</keyword>
<keyword id="KW-1267">Proteomics identification</keyword>
<keyword id="KW-1185">Reference proteome</keyword>
<keyword id="KW-0677">Repeat</keyword>